<organism>
    <name type="scientific">Pongo abelii</name>
    <name type="common">Sumatran orangutan</name>
    <name type="synonym">Pongo pygmaeus abelii</name>
    <dbReference type="NCBI Taxonomy" id="9601"/>
    <lineage>
        <taxon>Eukaryota</taxon>
        <taxon>Metazoa</taxon>
        <taxon>Chordata</taxon>
        <taxon>Craniata</taxon>
        <taxon>Vertebrata</taxon>
        <taxon>Euteleostomi</taxon>
        <taxon>Mammalia</taxon>
        <taxon>Eutheria</taxon>
        <taxon>Euarchontoglires</taxon>
        <taxon>Primates</taxon>
        <taxon>Haplorrhini</taxon>
        <taxon>Catarrhini</taxon>
        <taxon>Hominidae</taxon>
        <taxon>Pongo</taxon>
    </lineage>
</organism>
<dbReference type="EMBL" id="CR858734">
    <property type="protein sequence ID" value="CAH90943.1"/>
    <property type="molecule type" value="mRNA"/>
</dbReference>
<dbReference type="EMBL" id="CR861370">
    <property type="protein sequence ID" value="CAH93430.1"/>
    <property type="molecule type" value="mRNA"/>
</dbReference>
<dbReference type="RefSeq" id="NP_001127009.1">
    <property type="nucleotide sequence ID" value="NM_001133537.1"/>
</dbReference>
<dbReference type="SMR" id="Q5R486"/>
<dbReference type="FunCoup" id="Q5R486">
    <property type="interactions" value="623"/>
</dbReference>
<dbReference type="STRING" id="9601.ENSPPYP00000020685"/>
<dbReference type="GeneID" id="100174033"/>
<dbReference type="KEGG" id="pon:100174033"/>
<dbReference type="CTD" id="10687"/>
<dbReference type="eggNOG" id="ENOG502RWTN">
    <property type="taxonomic scope" value="Eukaryota"/>
</dbReference>
<dbReference type="InParanoid" id="Q5R486"/>
<dbReference type="OrthoDB" id="115435at2759"/>
<dbReference type="Proteomes" id="UP000001595">
    <property type="component" value="Unplaced"/>
</dbReference>
<dbReference type="GO" id="GO:0005730">
    <property type="term" value="C:nucleolus"/>
    <property type="evidence" value="ECO:0007669"/>
    <property type="project" value="UniProtKB-SubCell"/>
</dbReference>
<dbReference type="InterPro" id="IPR026523">
    <property type="entry name" value="PNMA"/>
</dbReference>
<dbReference type="InterPro" id="IPR048270">
    <property type="entry name" value="PNMA_C"/>
</dbReference>
<dbReference type="InterPro" id="IPR048271">
    <property type="entry name" value="PNMA_N"/>
</dbReference>
<dbReference type="PANTHER" id="PTHR23095">
    <property type="entry name" value="PARANEOPLASTIC ANTIGEN"/>
    <property type="match status" value="1"/>
</dbReference>
<dbReference type="PANTHER" id="PTHR23095:SF16">
    <property type="entry name" value="PARANEOPLASTIC ANTIGEN MA2"/>
    <property type="match status" value="1"/>
</dbReference>
<dbReference type="Pfam" id="PF14893">
    <property type="entry name" value="PNMA"/>
    <property type="match status" value="1"/>
</dbReference>
<dbReference type="Pfam" id="PF20846">
    <property type="entry name" value="PNMA_N"/>
    <property type="match status" value="1"/>
</dbReference>
<feature type="initiator methionine" description="Removed" evidence="2">
    <location>
        <position position="1"/>
    </location>
</feature>
<feature type="chain" id="PRO_0000280218" description="Paraneoplastic antigen Ma2 homolog">
    <location>
        <begin position="2"/>
        <end position="364"/>
    </location>
</feature>
<feature type="region of interest" description="Disordered" evidence="3">
    <location>
        <begin position="335"/>
        <end position="364"/>
    </location>
</feature>
<feature type="compositionally biased region" description="Acidic residues" evidence="3">
    <location>
        <begin position="335"/>
        <end position="353"/>
    </location>
</feature>
<feature type="modified residue" description="N-acetylalanine" evidence="2">
    <location>
        <position position="2"/>
    </location>
</feature>
<reference key="1">
    <citation type="submission" date="2004-11" db="EMBL/GenBank/DDBJ databases">
        <authorList>
            <consortium name="The German cDNA consortium"/>
        </authorList>
    </citation>
    <scope>NUCLEOTIDE SEQUENCE [LARGE SCALE MRNA]</scope>
    <source>
        <tissue>Brain cortex</tissue>
    </source>
</reference>
<accession>Q5R486</accession>
<name>PNMA2_PONAB</name>
<evidence type="ECO:0000250" key="1"/>
<evidence type="ECO:0000250" key="2">
    <source>
        <dbReference type="UniProtKB" id="Q9UL42"/>
    </source>
</evidence>
<evidence type="ECO:0000256" key="3">
    <source>
        <dbReference type="SAM" id="MobiDB-lite"/>
    </source>
</evidence>
<evidence type="ECO:0000305" key="4"/>
<keyword id="KW-0007">Acetylation</keyword>
<keyword id="KW-0539">Nucleus</keyword>
<keyword id="KW-1185">Reference proteome</keyword>
<protein>
    <recommendedName>
        <fullName>Paraneoplastic antigen Ma2 homolog</fullName>
    </recommendedName>
</protein>
<gene>
    <name type="primary">PNMA2</name>
</gene>
<proteinExistence type="evidence at transcript level"/>
<sequence>MALALLEDWCRIMSVDEQKSLMVTGIPADYEEAEIQEVLQETLKSLGRYRLLGKIFRKQENANAVLLELLEDTDISAIPSEVQGKGGVWKVIFKTPNQDTEFLERLNLFLEKEGQTVSGMFRALGHEGVSSATVPCISPELLAHLLGQAMAHAPQPLLPMRYRKLRVFSGSAVPAPEEEPFEVWLEQATEIVKEWPVTEAEKKRWLAESLRGPALDLMHIVQADNPSISVEECLEAFKQVFGSLESRRAAQVRYLKTYQEEGEKVSAYVLRLETLLRRAVEKRAIPRRIADQVRLEQVMAGATLNQMLWCRLRELKDQGPPPSFLELMKVIREEEEEEASFENESIEEPEEGDGYGRWNHEGDD</sequence>
<comment type="subcellular location">
    <subcellularLocation>
        <location evidence="1">Nucleus</location>
        <location evidence="1">Nucleolus</location>
    </subcellularLocation>
</comment>
<comment type="similarity">
    <text evidence="4">Belongs to the PNMA family.</text>
</comment>